<reference key="1">
    <citation type="submission" date="2008-10" db="EMBL/GenBank/DDBJ databases">
        <title>Genome sequence of Bacillus cereus AH187.</title>
        <authorList>
            <person name="Dodson R.J."/>
            <person name="Durkin A.S."/>
            <person name="Rosovitz M.J."/>
            <person name="Rasko D.A."/>
            <person name="Kolsto A.B."/>
            <person name="Okstad O.A."/>
            <person name="Ravel J."/>
            <person name="Sutton G."/>
        </authorList>
    </citation>
    <scope>NUCLEOTIDE SEQUENCE [LARGE SCALE GENOMIC DNA]</scope>
    <source>
        <strain>AH187</strain>
    </source>
</reference>
<accession>B7HY70</accession>
<keyword id="KW-0066">ATP synthesis</keyword>
<keyword id="KW-1003">Cell membrane</keyword>
<keyword id="KW-0138">CF(0)</keyword>
<keyword id="KW-0375">Hydrogen ion transport</keyword>
<keyword id="KW-0406">Ion transport</keyword>
<keyword id="KW-0446">Lipid-binding</keyword>
<keyword id="KW-0472">Membrane</keyword>
<keyword id="KW-0812">Transmembrane</keyword>
<keyword id="KW-1133">Transmembrane helix</keyword>
<keyword id="KW-0813">Transport</keyword>
<organism>
    <name type="scientific">Bacillus cereus (strain AH187)</name>
    <dbReference type="NCBI Taxonomy" id="405534"/>
    <lineage>
        <taxon>Bacteria</taxon>
        <taxon>Bacillati</taxon>
        <taxon>Bacillota</taxon>
        <taxon>Bacilli</taxon>
        <taxon>Bacillales</taxon>
        <taxon>Bacillaceae</taxon>
        <taxon>Bacillus</taxon>
        <taxon>Bacillus cereus group</taxon>
    </lineage>
</organism>
<name>ATPL_BACC7</name>
<feature type="chain" id="PRO_1000184329" description="ATP synthase subunit c">
    <location>
        <begin position="1"/>
        <end position="72"/>
    </location>
</feature>
<feature type="transmembrane region" description="Helical" evidence="1">
    <location>
        <begin position="1"/>
        <end position="21"/>
    </location>
</feature>
<feature type="transmembrane region" description="Helical" evidence="1">
    <location>
        <begin position="49"/>
        <end position="69"/>
    </location>
</feature>
<feature type="site" description="Reversibly protonated during proton transport" evidence="1">
    <location>
        <position position="56"/>
    </location>
</feature>
<comment type="function">
    <text evidence="1">F(1)F(0) ATP synthase produces ATP from ADP in the presence of a proton or sodium gradient. F-type ATPases consist of two structural domains, F(1) containing the extramembraneous catalytic core and F(0) containing the membrane proton channel, linked together by a central stalk and a peripheral stalk. During catalysis, ATP synthesis in the catalytic domain of F(1) is coupled via a rotary mechanism of the central stalk subunits to proton translocation.</text>
</comment>
<comment type="function">
    <text evidence="1">Key component of the F(0) channel; it plays a direct role in translocation across the membrane. A homomeric c-ring of between 10-14 subunits forms the central stalk rotor element with the F(1) delta and epsilon subunits.</text>
</comment>
<comment type="subunit">
    <text evidence="1">F-type ATPases have 2 components, F(1) - the catalytic core - and F(0) - the membrane proton channel. F(1) has five subunits: alpha(3), beta(3), gamma(1), delta(1), epsilon(1). F(0) has three main subunits: a(1), b(2) and c(10-14). The alpha and beta chains form an alternating ring which encloses part of the gamma chain. F(1) is attached to F(0) by a central stalk formed by the gamma and epsilon chains, while a peripheral stalk is formed by the delta and b chains.</text>
</comment>
<comment type="subcellular location">
    <subcellularLocation>
        <location evidence="1">Cell membrane</location>
        <topology evidence="1">Multi-pass membrane protein</topology>
    </subcellularLocation>
</comment>
<comment type="similarity">
    <text evidence="1">Belongs to the ATPase C chain family.</text>
</comment>
<sequence>MSLGVIAAAIAIGLSALGAGIGNGLIVSRTIEGVARQPELKGALQTIMFIGVALVEALPIIGVVIAFIVMNK</sequence>
<evidence type="ECO:0000255" key="1">
    <source>
        <dbReference type="HAMAP-Rule" id="MF_01396"/>
    </source>
</evidence>
<gene>
    <name evidence="1" type="primary">atpE</name>
    <name type="ordered locus">BCAH187_A5488</name>
</gene>
<proteinExistence type="inferred from homology"/>
<dbReference type="EMBL" id="CP001177">
    <property type="protein sequence ID" value="ACJ82318.1"/>
    <property type="molecule type" value="Genomic_DNA"/>
</dbReference>
<dbReference type="SMR" id="B7HY70"/>
<dbReference type="KEGG" id="bcr:BCAH187_A5488"/>
<dbReference type="HOGENOM" id="CLU_148047_1_1_9"/>
<dbReference type="Proteomes" id="UP000002214">
    <property type="component" value="Chromosome"/>
</dbReference>
<dbReference type="GO" id="GO:0005886">
    <property type="term" value="C:plasma membrane"/>
    <property type="evidence" value="ECO:0007669"/>
    <property type="project" value="UniProtKB-SubCell"/>
</dbReference>
<dbReference type="GO" id="GO:0045259">
    <property type="term" value="C:proton-transporting ATP synthase complex"/>
    <property type="evidence" value="ECO:0007669"/>
    <property type="project" value="UniProtKB-KW"/>
</dbReference>
<dbReference type="GO" id="GO:0033177">
    <property type="term" value="C:proton-transporting two-sector ATPase complex, proton-transporting domain"/>
    <property type="evidence" value="ECO:0007669"/>
    <property type="project" value="InterPro"/>
</dbReference>
<dbReference type="GO" id="GO:0008289">
    <property type="term" value="F:lipid binding"/>
    <property type="evidence" value="ECO:0007669"/>
    <property type="project" value="UniProtKB-KW"/>
</dbReference>
<dbReference type="GO" id="GO:0046933">
    <property type="term" value="F:proton-transporting ATP synthase activity, rotational mechanism"/>
    <property type="evidence" value="ECO:0007669"/>
    <property type="project" value="UniProtKB-UniRule"/>
</dbReference>
<dbReference type="CDD" id="cd18185">
    <property type="entry name" value="ATP-synt_Fo_c_ATPE"/>
    <property type="match status" value="1"/>
</dbReference>
<dbReference type="FunFam" id="1.20.20.10:FF:000004">
    <property type="entry name" value="ATP synthase subunit c"/>
    <property type="match status" value="1"/>
</dbReference>
<dbReference type="Gene3D" id="1.20.20.10">
    <property type="entry name" value="F1F0 ATP synthase subunit C"/>
    <property type="match status" value="1"/>
</dbReference>
<dbReference type="HAMAP" id="MF_01396">
    <property type="entry name" value="ATP_synth_c_bact"/>
    <property type="match status" value="1"/>
</dbReference>
<dbReference type="InterPro" id="IPR005953">
    <property type="entry name" value="ATP_synth_csu_bac/chlpt"/>
</dbReference>
<dbReference type="InterPro" id="IPR000454">
    <property type="entry name" value="ATP_synth_F0_csu"/>
</dbReference>
<dbReference type="InterPro" id="IPR020537">
    <property type="entry name" value="ATP_synth_F0_csu_DDCD_BS"/>
</dbReference>
<dbReference type="InterPro" id="IPR038662">
    <property type="entry name" value="ATP_synth_F0_csu_sf"/>
</dbReference>
<dbReference type="InterPro" id="IPR002379">
    <property type="entry name" value="ATPase_proteolipid_c-like_dom"/>
</dbReference>
<dbReference type="InterPro" id="IPR035921">
    <property type="entry name" value="F/V-ATP_Csub_sf"/>
</dbReference>
<dbReference type="NCBIfam" id="TIGR01260">
    <property type="entry name" value="ATP_synt_c"/>
    <property type="match status" value="1"/>
</dbReference>
<dbReference type="NCBIfam" id="NF005363">
    <property type="entry name" value="PRK06876.1"/>
    <property type="match status" value="1"/>
</dbReference>
<dbReference type="PANTHER" id="PTHR10031">
    <property type="entry name" value="ATP SYNTHASE LIPID-BINDING PROTEIN, MITOCHONDRIAL"/>
    <property type="match status" value="1"/>
</dbReference>
<dbReference type="PANTHER" id="PTHR10031:SF0">
    <property type="entry name" value="ATPASE PROTEIN 9"/>
    <property type="match status" value="1"/>
</dbReference>
<dbReference type="Pfam" id="PF00137">
    <property type="entry name" value="ATP-synt_C"/>
    <property type="match status" value="1"/>
</dbReference>
<dbReference type="PRINTS" id="PR00124">
    <property type="entry name" value="ATPASEC"/>
</dbReference>
<dbReference type="SUPFAM" id="SSF81333">
    <property type="entry name" value="F1F0 ATP synthase subunit C"/>
    <property type="match status" value="1"/>
</dbReference>
<dbReference type="PROSITE" id="PS00605">
    <property type="entry name" value="ATPASE_C"/>
    <property type="match status" value="1"/>
</dbReference>
<protein>
    <recommendedName>
        <fullName evidence="1">ATP synthase subunit c</fullName>
    </recommendedName>
    <alternativeName>
        <fullName evidence="1">ATP synthase F(0) sector subunit c</fullName>
    </alternativeName>
    <alternativeName>
        <fullName evidence="1">F-type ATPase subunit c</fullName>
        <shortName evidence="1">F-ATPase subunit c</shortName>
    </alternativeName>
    <alternativeName>
        <fullName evidence="1">Lipid-binding protein</fullName>
    </alternativeName>
</protein>